<dbReference type="EMBL" id="AE007317">
    <property type="protein sequence ID" value="AAL00173.1"/>
    <property type="status" value="ALT_INIT"/>
    <property type="molecule type" value="Genomic_DNA"/>
</dbReference>
<dbReference type="PIR" id="H98042">
    <property type="entry name" value="H98042"/>
</dbReference>
<dbReference type="RefSeq" id="NP_358962.1">
    <property type="nucleotide sequence ID" value="NC_003098.1"/>
</dbReference>
<dbReference type="RefSeq" id="WP_000818760.1">
    <property type="nucleotide sequence ID" value="NC_003098.1"/>
</dbReference>
<dbReference type="SMR" id="Q8DP42"/>
<dbReference type="STRING" id="171101.spr1369"/>
<dbReference type="GeneID" id="45653244"/>
<dbReference type="KEGG" id="spr:spr1369"/>
<dbReference type="PATRIC" id="fig|171101.6.peg.1484"/>
<dbReference type="eggNOG" id="COG0782">
    <property type="taxonomic scope" value="Bacteria"/>
</dbReference>
<dbReference type="HOGENOM" id="CLU_101379_2_1_9"/>
<dbReference type="Proteomes" id="UP000000586">
    <property type="component" value="Chromosome"/>
</dbReference>
<dbReference type="GO" id="GO:0003677">
    <property type="term" value="F:DNA binding"/>
    <property type="evidence" value="ECO:0007669"/>
    <property type="project" value="UniProtKB-UniRule"/>
</dbReference>
<dbReference type="GO" id="GO:0070063">
    <property type="term" value="F:RNA polymerase binding"/>
    <property type="evidence" value="ECO:0007669"/>
    <property type="project" value="InterPro"/>
</dbReference>
<dbReference type="GO" id="GO:0006354">
    <property type="term" value="P:DNA-templated transcription elongation"/>
    <property type="evidence" value="ECO:0000318"/>
    <property type="project" value="GO_Central"/>
</dbReference>
<dbReference type="GO" id="GO:0032784">
    <property type="term" value="P:regulation of DNA-templated transcription elongation"/>
    <property type="evidence" value="ECO:0007669"/>
    <property type="project" value="UniProtKB-UniRule"/>
</dbReference>
<dbReference type="FunFam" id="1.10.287.180:FF:000001">
    <property type="entry name" value="Transcription elongation factor GreA"/>
    <property type="match status" value="1"/>
</dbReference>
<dbReference type="FunFam" id="3.10.50.30:FF:000001">
    <property type="entry name" value="Transcription elongation factor GreA"/>
    <property type="match status" value="1"/>
</dbReference>
<dbReference type="Gene3D" id="3.10.50.30">
    <property type="entry name" value="Transcription elongation factor, GreA/GreB, C-terminal domain"/>
    <property type="match status" value="1"/>
</dbReference>
<dbReference type="Gene3D" id="1.10.287.180">
    <property type="entry name" value="Transcription elongation factor, GreA/GreB, N-terminal domain"/>
    <property type="match status" value="1"/>
</dbReference>
<dbReference type="HAMAP" id="MF_00105">
    <property type="entry name" value="GreA_GreB"/>
    <property type="match status" value="1"/>
</dbReference>
<dbReference type="InterPro" id="IPR036953">
    <property type="entry name" value="GreA/GreB_C_sf"/>
</dbReference>
<dbReference type="InterPro" id="IPR018151">
    <property type="entry name" value="TF_GreA/GreB_CS"/>
</dbReference>
<dbReference type="InterPro" id="IPR006359">
    <property type="entry name" value="Tscrpt_elong_fac_GreA"/>
</dbReference>
<dbReference type="InterPro" id="IPR028624">
    <property type="entry name" value="Tscrpt_elong_fac_GreA/B"/>
</dbReference>
<dbReference type="InterPro" id="IPR001437">
    <property type="entry name" value="Tscrpt_elong_fac_GreA/B_C"/>
</dbReference>
<dbReference type="InterPro" id="IPR023459">
    <property type="entry name" value="Tscrpt_elong_fac_GreA/B_fam"/>
</dbReference>
<dbReference type="InterPro" id="IPR022691">
    <property type="entry name" value="Tscrpt_elong_fac_GreA/B_N"/>
</dbReference>
<dbReference type="InterPro" id="IPR036805">
    <property type="entry name" value="Tscrpt_elong_fac_GreA/B_N_sf"/>
</dbReference>
<dbReference type="NCBIfam" id="TIGR01462">
    <property type="entry name" value="greA"/>
    <property type="match status" value="1"/>
</dbReference>
<dbReference type="NCBIfam" id="NF001260">
    <property type="entry name" value="PRK00226.1-1"/>
    <property type="match status" value="1"/>
</dbReference>
<dbReference type="NCBIfam" id="NF001263">
    <property type="entry name" value="PRK00226.1-4"/>
    <property type="match status" value="1"/>
</dbReference>
<dbReference type="PANTHER" id="PTHR30437">
    <property type="entry name" value="TRANSCRIPTION ELONGATION FACTOR GREA"/>
    <property type="match status" value="1"/>
</dbReference>
<dbReference type="PANTHER" id="PTHR30437:SF4">
    <property type="entry name" value="TRANSCRIPTION ELONGATION FACTOR GREA"/>
    <property type="match status" value="1"/>
</dbReference>
<dbReference type="Pfam" id="PF01272">
    <property type="entry name" value="GreA_GreB"/>
    <property type="match status" value="1"/>
</dbReference>
<dbReference type="Pfam" id="PF03449">
    <property type="entry name" value="GreA_GreB_N"/>
    <property type="match status" value="1"/>
</dbReference>
<dbReference type="PIRSF" id="PIRSF006092">
    <property type="entry name" value="GreA_GreB"/>
    <property type="match status" value="1"/>
</dbReference>
<dbReference type="SUPFAM" id="SSF54534">
    <property type="entry name" value="FKBP-like"/>
    <property type="match status" value="1"/>
</dbReference>
<dbReference type="SUPFAM" id="SSF46557">
    <property type="entry name" value="GreA transcript cleavage protein, N-terminal domain"/>
    <property type="match status" value="1"/>
</dbReference>
<dbReference type="PROSITE" id="PS00829">
    <property type="entry name" value="GREAB_1"/>
    <property type="match status" value="1"/>
</dbReference>
<dbReference type="PROSITE" id="PS00830">
    <property type="entry name" value="GREAB_2"/>
    <property type="match status" value="1"/>
</dbReference>
<reference key="1">
    <citation type="journal article" date="2001" name="J. Bacteriol.">
        <title>Genome of the bacterium Streptococcus pneumoniae strain R6.</title>
        <authorList>
            <person name="Hoskins J."/>
            <person name="Alborn W.E. Jr."/>
            <person name="Arnold J."/>
            <person name="Blaszczak L.C."/>
            <person name="Burgett S."/>
            <person name="DeHoff B.S."/>
            <person name="Estrem S.T."/>
            <person name="Fritz L."/>
            <person name="Fu D.-J."/>
            <person name="Fuller W."/>
            <person name="Geringer C."/>
            <person name="Gilmour R."/>
            <person name="Glass J.S."/>
            <person name="Khoja H."/>
            <person name="Kraft A.R."/>
            <person name="Lagace R.E."/>
            <person name="LeBlanc D.J."/>
            <person name="Lee L.N."/>
            <person name="Lefkowitz E.J."/>
            <person name="Lu J."/>
            <person name="Matsushima P."/>
            <person name="McAhren S.M."/>
            <person name="McHenney M."/>
            <person name="McLeaster K."/>
            <person name="Mundy C.W."/>
            <person name="Nicas T.I."/>
            <person name="Norris F.H."/>
            <person name="O'Gara M."/>
            <person name="Peery R.B."/>
            <person name="Robertson G.T."/>
            <person name="Rockey P."/>
            <person name="Sun P.-M."/>
            <person name="Winkler M.E."/>
            <person name="Yang Y."/>
            <person name="Young-Bellido M."/>
            <person name="Zhao G."/>
            <person name="Zook C.A."/>
            <person name="Baltz R.H."/>
            <person name="Jaskunas S.R."/>
            <person name="Rosteck P.R. Jr."/>
            <person name="Skatrud P.L."/>
            <person name="Glass J.I."/>
        </authorList>
    </citation>
    <scope>NUCLEOTIDE SEQUENCE [LARGE SCALE GENOMIC DNA]</scope>
    <source>
        <strain>ATCC BAA-255 / R6</strain>
    </source>
</reference>
<gene>
    <name evidence="1" type="primary">greA</name>
    <name type="ordered locus">spr1369</name>
</gene>
<evidence type="ECO:0000255" key="1">
    <source>
        <dbReference type="HAMAP-Rule" id="MF_00105"/>
    </source>
</evidence>
<evidence type="ECO:0000305" key="2"/>
<sequence>MAEKTYPMTLEEKEKLEKELEELKLVRRPEVVERIKIARSYGDLSENSEYEAAKDEQAFVEGQISSLETKIRYAEIVNSDAVAQDEVAIGKTVTIQEIGEDEEEVYIIVGSAGADAFAGKVSNESPIGQALIGKKTGDTATIETPVGSYDVKILKVEKTA</sequence>
<feature type="chain" id="PRO_0000176980" description="Transcription elongation factor GreA">
    <location>
        <begin position="1"/>
        <end position="160"/>
    </location>
</feature>
<feature type="coiled-coil region" evidence="1">
    <location>
        <begin position="1"/>
        <end position="72"/>
    </location>
</feature>
<name>GREA_STRR6</name>
<protein>
    <recommendedName>
        <fullName evidence="1">Transcription elongation factor GreA</fullName>
    </recommendedName>
    <alternativeName>
        <fullName evidence="1">Transcript cleavage factor GreA</fullName>
    </alternativeName>
</protein>
<accession>Q8DP42</accession>
<comment type="function">
    <text evidence="1">Necessary for efficient RNA polymerase transcription elongation past template-encoded arresting sites. The arresting sites in DNA have the property of trapping a certain fraction of elongating RNA polymerases that pass through, resulting in locked ternary complexes. Cleavage of the nascent transcript by cleavage factors such as GreA or GreB allows the resumption of elongation from the new 3'terminus. GreA releases sequences of 2 to 3 nucleotides.</text>
</comment>
<comment type="similarity">
    <text evidence="1">Belongs to the GreA/GreB family.</text>
</comment>
<comment type="sequence caution" evidence="2">
    <conflict type="erroneous initiation">
        <sequence resource="EMBL-CDS" id="AAL00173"/>
    </conflict>
</comment>
<organism>
    <name type="scientific">Streptococcus pneumoniae (strain ATCC BAA-255 / R6)</name>
    <dbReference type="NCBI Taxonomy" id="171101"/>
    <lineage>
        <taxon>Bacteria</taxon>
        <taxon>Bacillati</taxon>
        <taxon>Bacillota</taxon>
        <taxon>Bacilli</taxon>
        <taxon>Lactobacillales</taxon>
        <taxon>Streptococcaceae</taxon>
        <taxon>Streptococcus</taxon>
    </lineage>
</organism>
<proteinExistence type="inferred from homology"/>
<keyword id="KW-0175">Coiled coil</keyword>
<keyword id="KW-0238">DNA-binding</keyword>
<keyword id="KW-1185">Reference proteome</keyword>
<keyword id="KW-0804">Transcription</keyword>
<keyword id="KW-0805">Transcription regulation</keyword>